<gene>
    <name evidence="1" type="primary">glyA</name>
    <name type="ordered locus">MCCL_1766</name>
</gene>
<protein>
    <recommendedName>
        <fullName evidence="1">Serine hydroxymethyltransferase</fullName>
        <shortName evidence="1">SHMT</shortName>
        <shortName evidence="1">Serine methylase</shortName>
        <ecNumber evidence="1">2.1.2.1</ecNumber>
    </recommendedName>
</protein>
<proteinExistence type="inferred from homology"/>
<sequence>MSEIKQQDNQVFEAITKEFERQDHHIELIASENFVSKAVMEAQGSVLTNKYAEGYPHRRYYGGCEFVDIVEDLARDRIKELFGAEHVNVQPHSGSQANMAVYRVALKPGDTVLGMNLSHGGHLTHGSSVNFSGVDYNFVAYGVDKETEKIDYDVVRELAREHKPALIIAGASAYSRIIDFEEFKAIADEVGAKLMVDMAHIAGLVAAGLHPNPVPHADFVTTTTHKTLRGPRGGMIICKEEYAKAIDKMIFPGIQGGPLMHVIAAKAVAFGEALTADFKAYQQQVVLNAKTLADALTEKGLRIVSGGTDNHVMSIDVTSFNITGKVAERALDDVGITTNKNTIPFDKESPFVTSGIRIGTPAVTTRGFNEEDMKEIASIIADVLAHPEDENVKHDAKVRVRAITEKYPLYK</sequence>
<comment type="function">
    <text evidence="1">Catalyzes the reversible interconversion of serine and glycine with tetrahydrofolate (THF) serving as the one-carbon carrier. This reaction serves as the major source of one-carbon groups required for the biosynthesis of purines, thymidylate, methionine, and other important biomolecules. Also exhibits THF-independent aldolase activity toward beta-hydroxyamino acids, producing glycine and aldehydes, via a retro-aldol mechanism.</text>
</comment>
<comment type="catalytic activity">
    <reaction evidence="1">
        <text>(6R)-5,10-methylene-5,6,7,8-tetrahydrofolate + glycine + H2O = (6S)-5,6,7,8-tetrahydrofolate + L-serine</text>
        <dbReference type="Rhea" id="RHEA:15481"/>
        <dbReference type="ChEBI" id="CHEBI:15377"/>
        <dbReference type="ChEBI" id="CHEBI:15636"/>
        <dbReference type="ChEBI" id="CHEBI:33384"/>
        <dbReference type="ChEBI" id="CHEBI:57305"/>
        <dbReference type="ChEBI" id="CHEBI:57453"/>
        <dbReference type="EC" id="2.1.2.1"/>
    </reaction>
</comment>
<comment type="cofactor">
    <cofactor evidence="1">
        <name>pyridoxal 5'-phosphate</name>
        <dbReference type="ChEBI" id="CHEBI:597326"/>
    </cofactor>
</comment>
<comment type="pathway">
    <text evidence="1">One-carbon metabolism; tetrahydrofolate interconversion.</text>
</comment>
<comment type="pathway">
    <text evidence="1">Amino-acid biosynthesis; glycine biosynthesis; glycine from L-serine: step 1/1.</text>
</comment>
<comment type="subunit">
    <text evidence="1">Homodimer.</text>
</comment>
<comment type="subcellular location">
    <subcellularLocation>
        <location evidence="1">Cytoplasm</location>
    </subcellularLocation>
</comment>
<comment type="similarity">
    <text evidence="1">Belongs to the SHMT family.</text>
</comment>
<name>GLYA_MACCJ</name>
<evidence type="ECO:0000255" key="1">
    <source>
        <dbReference type="HAMAP-Rule" id="MF_00051"/>
    </source>
</evidence>
<organism>
    <name type="scientific">Macrococcus caseolyticus (strain JCSC5402)</name>
    <name type="common">Macrococcoides caseolyticum</name>
    <dbReference type="NCBI Taxonomy" id="458233"/>
    <lineage>
        <taxon>Bacteria</taxon>
        <taxon>Bacillati</taxon>
        <taxon>Bacillota</taxon>
        <taxon>Bacilli</taxon>
        <taxon>Bacillales</taxon>
        <taxon>Staphylococcaceae</taxon>
        <taxon>Macrococcoides</taxon>
    </lineage>
</organism>
<keyword id="KW-0028">Amino-acid biosynthesis</keyword>
<keyword id="KW-0963">Cytoplasm</keyword>
<keyword id="KW-0554">One-carbon metabolism</keyword>
<keyword id="KW-0663">Pyridoxal phosphate</keyword>
<keyword id="KW-1185">Reference proteome</keyword>
<keyword id="KW-0808">Transferase</keyword>
<dbReference type="EC" id="2.1.2.1" evidence="1"/>
<dbReference type="EMBL" id="AP009484">
    <property type="protein sequence ID" value="BAH18473.1"/>
    <property type="molecule type" value="Genomic_DNA"/>
</dbReference>
<dbReference type="RefSeq" id="WP_015912265.1">
    <property type="nucleotide sequence ID" value="NC_011999.1"/>
</dbReference>
<dbReference type="SMR" id="B9E8F5"/>
<dbReference type="STRING" id="458233.MCCL_1766"/>
<dbReference type="KEGG" id="mcl:MCCL_1766"/>
<dbReference type="eggNOG" id="COG0112">
    <property type="taxonomic scope" value="Bacteria"/>
</dbReference>
<dbReference type="HOGENOM" id="CLU_022477_2_1_9"/>
<dbReference type="OrthoDB" id="9803846at2"/>
<dbReference type="UniPathway" id="UPA00193"/>
<dbReference type="UniPathway" id="UPA00288">
    <property type="reaction ID" value="UER01023"/>
</dbReference>
<dbReference type="Proteomes" id="UP000001383">
    <property type="component" value="Chromosome"/>
</dbReference>
<dbReference type="GO" id="GO:0005829">
    <property type="term" value="C:cytosol"/>
    <property type="evidence" value="ECO:0007669"/>
    <property type="project" value="TreeGrafter"/>
</dbReference>
<dbReference type="GO" id="GO:0004372">
    <property type="term" value="F:glycine hydroxymethyltransferase activity"/>
    <property type="evidence" value="ECO:0007669"/>
    <property type="project" value="UniProtKB-UniRule"/>
</dbReference>
<dbReference type="GO" id="GO:0030170">
    <property type="term" value="F:pyridoxal phosphate binding"/>
    <property type="evidence" value="ECO:0007669"/>
    <property type="project" value="UniProtKB-UniRule"/>
</dbReference>
<dbReference type="GO" id="GO:0019264">
    <property type="term" value="P:glycine biosynthetic process from serine"/>
    <property type="evidence" value="ECO:0007669"/>
    <property type="project" value="UniProtKB-UniRule"/>
</dbReference>
<dbReference type="GO" id="GO:0035999">
    <property type="term" value="P:tetrahydrofolate interconversion"/>
    <property type="evidence" value="ECO:0007669"/>
    <property type="project" value="UniProtKB-UniRule"/>
</dbReference>
<dbReference type="CDD" id="cd00378">
    <property type="entry name" value="SHMT"/>
    <property type="match status" value="1"/>
</dbReference>
<dbReference type="FunFam" id="3.40.640.10:FF:000001">
    <property type="entry name" value="Serine hydroxymethyltransferase"/>
    <property type="match status" value="1"/>
</dbReference>
<dbReference type="FunFam" id="3.90.1150.10:FF:000003">
    <property type="entry name" value="Serine hydroxymethyltransferase"/>
    <property type="match status" value="1"/>
</dbReference>
<dbReference type="Gene3D" id="3.90.1150.10">
    <property type="entry name" value="Aspartate Aminotransferase, domain 1"/>
    <property type="match status" value="1"/>
</dbReference>
<dbReference type="Gene3D" id="3.40.640.10">
    <property type="entry name" value="Type I PLP-dependent aspartate aminotransferase-like (Major domain)"/>
    <property type="match status" value="1"/>
</dbReference>
<dbReference type="HAMAP" id="MF_00051">
    <property type="entry name" value="SHMT"/>
    <property type="match status" value="1"/>
</dbReference>
<dbReference type="InterPro" id="IPR015424">
    <property type="entry name" value="PyrdxlP-dep_Trfase"/>
</dbReference>
<dbReference type="InterPro" id="IPR015421">
    <property type="entry name" value="PyrdxlP-dep_Trfase_major"/>
</dbReference>
<dbReference type="InterPro" id="IPR015422">
    <property type="entry name" value="PyrdxlP-dep_Trfase_small"/>
</dbReference>
<dbReference type="InterPro" id="IPR001085">
    <property type="entry name" value="Ser_HO-MeTrfase"/>
</dbReference>
<dbReference type="InterPro" id="IPR049943">
    <property type="entry name" value="Ser_HO-MeTrfase-like"/>
</dbReference>
<dbReference type="InterPro" id="IPR019798">
    <property type="entry name" value="Ser_HO-MeTrfase_PLP_BS"/>
</dbReference>
<dbReference type="InterPro" id="IPR039429">
    <property type="entry name" value="SHMT-like_dom"/>
</dbReference>
<dbReference type="NCBIfam" id="NF000586">
    <property type="entry name" value="PRK00011.1"/>
    <property type="match status" value="1"/>
</dbReference>
<dbReference type="PANTHER" id="PTHR11680">
    <property type="entry name" value="SERINE HYDROXYMETHYLTRANSFERASE"/>
    <property type="match status" value="1"/>
</dbReference>
<dbReference type="PANTHER" id="PTHR11680:SF35">
    <property type="entry name" value="SERINE HYDROXYMETHYLTRANSFERASE 1"/>
    <property type="match status" value="1"/>
</dbReference>
<dbReference type="Pfam" id="PF00464">
    <property type="entry name" value="SHMT"/>
    <property type="match status" value="1"/>
</dbReference>
<dbReference type="PIRSF" id="PIRSF000412">
    <property type="entry name" value="SHMT"/>
    <property type="match status" value="1"/>
</dbReference>
<dbReference type="SUPFAM" id="SSF53383">
    <property type="entry name" value="PLP-dependent transferases"/>
    <property type="match status" value="1"/>
</dbReference>
<dbReference type="PROSITE" id="PS00096">
    <property type="entry name" value="SHMT"/>
    <property type="match status" value="1"/>
</dbReference>
<feature type="chain" id="PRO_1000117642" description="Serine hydroxymethyltransferase">
    <location>
        <begin position="1"/>
        <end position="411"/>
    </location>
</feature>
<feature type="binding site" evidence="1">
    <location>
        <position position="117"/>
    </location>
    <ligand>
        <name>(6S)-5,6,7,8-tetrahydrofolate</name>
        <dbReference type="ChEBI" id="CHEBI:57453"/>
    </ligand>
</feature>
<feature type="binding site" evidence="1">
    <location>
        <begin position="121"/>
        <end position="123"/>
    </location>
    <ligand>
        <name>(6S)-5,6,7,8-tetrahydrofolate</name>
        <dbReference type="ChEBI" id="CHEBI:57453"/>
    </ligand>
</feature>
<feature type="binding site" evidence="1">
    <location>
        <position position="241"/>
    </location>
    <ligand>
        <name>(6S)-5,6,7,8-tetrahydrofolate</name>
        <dbReference type="ChEBI" id="CHEBI:57453"/>
    </ligand>
</feature>
<feature type="binding site" evidence="1">
    <location>
        <begin position="349"/>
        <end position="351"/>
    </location>
    <ligand>
        <name>(6S)-5,6,7,8-tetrahydrofolate</name>
        <dbReference type="ChEBI" id="CHEBI:57453"/>
    </ligand>
</feature>
<feature type="site" description="Plays an important role in substrate specificity" evidence="1">
    <location>
        <position position="225"/>
    </location>
</feature>
<feature type="modified residue" description="N6-(pyridoxal phosphate)lysine" evidence="1">
    <location>
        <position position="226"/>
    </location>
</feature>
<accession>B9E8F5</accession>
<reference key="1">
    <citation type="journal article" date="2009" name="J. Bacteriol.">
        <title>Complete genome sequence of Macrococcus caseolyticus strain JCSCS5402, reflecting the ancestral genome of the human-pathogenic staphylococci.</title>
        <authorList>
            <person name="Baba T."/>
            <person name="Kuwahara-Arai K."/>
            <person name="Uchiyama I."/>
            <person name="Takeuchi F."/>
            <person name="Ito T."/>
            <person name="Hiramatsu K."/>
        </authorList>
    </citation>
    <scope>NUCLEOTIDE SEQUENCE [LARGE SCALE GENOMIC DNA]</scope>
    <source>
        <strain>JCSC5402</strain>
    </source>
</reference>